<feature type="chain" id="PRO_0000166662" description="Phosphoenolpyruvate carboxylase 2">
    <location>
        <begin position="1"/>
        <end position="1221"/>
    </location>
</feature>
<feature type="region of interest" description="Disordered" evidence="3">
    <location>
        <begin position="443"/>
        <end position="588"/>
    </location>
</feature>
<feature type="region of interest" description="Disordered" evidence="3">
    <location>
        <begin position="642"/>
        <end position="661"/>
    </location>
</feature>
<feature type="compositionally biased region" description="Low complexity" evidence="3">
    <location>
        <begin position="503"/>
        <end position="513"/>
    </location>
</feature>
<feature type="compositionally biased region" description="Low complexity" evidence="3">
    <location>
        <begin position="550"/>
        <end position="564"/>
    </location>
</feature>
<feature type="compositionally biased region" description="Gly residues" evidence="3">
    <location>
        <begin position="565"/>
        <end position="575"/>
    </location>
</feature>
<feature type="compositionally biased region" description="Gly residues" evidence="3">
    <location>
        <begin position="648"/>
        <end position="661"/>
    </location>
</feature>
<feature type="active site" evidence="2">
    <location>
        <position position="156"/>
    </location>
</feature>
<feature type="active site" evidence="2">
    <location>
        <position position="886"/>
    </location>
</feature>
<comment type="function">
    <text evidence="2">Through the carboxylation of phosphoenolpyruvate (PEP) it forms oxaloacetate, a four-carbon dicarboxylic acid source for the tricarboxylic acid cycle.</text>
</comment>
<comment type="catalytic activity">
    <reaction>
        <text>oxaloacetate + phosphate = phosphoenolpyruvate + hydrogencarbonate</text>
        <dbReference type="Rhea" id="RHEA:28370"/>
        <dbReference type="ChEBI" id="CHEBI:16452"/>
        <dbReference type="ChEBI" id="CHEBI:17544"/>
        <dbReference type="ChEBI" id="CHEBI:43474"/>
        <dbReference type="ChEBI" id="CHEBI:58702"/>
        <dbReference type="EC" id="4.1.1.31"/>
    </reaction>
</comment>
<comment type="cofactor">
    <cofactor evidence="1">
        <name>Mg(2+)</name>
        <dbReference type="ChEBI" id="CHEBI:18420"/>
    </cofactor>
</comment>
<comment type="subcellular location">
    <subcellularLocation>
        <location evidence="1">Cytoplasm</location>
    </subcellularLocation>
</comment>
<comment type="similarity">
    <text evidence="4">Belongs to the PEPCase type 1 family.</text>
</comment>
<accession>Q6R2V6</accession>
<keyword id="KW-0021">Allosteric enzyme</keyword>
<keyword id="KW-0120">Carbon dioxide fixation</keyword>
<keyword id="KW-0963">Cytoplasm</keyword>
<keyword id="KW-0456">Lyase</keyword>
<keyword id="KW-0460">Magnesium</keyword>
<keyword id="KW-0670">Pyruvate</keyword>
<evidence type="ECO:0000250" key="1"/>
<evidence type="ECO:0000250" key="2">
    <source>
        <dbReference type="UniProtKB" id="P29194"/>
    </source>
</evidence>
<evidence type="ECO:0000256" key="3">
    <source>
        <dbReference type="SAM" id="MobiDB-lite"/>
    </source>
</evidence>
<evidence type="ECO:0000305" key="4"/>
<evidence type="ECO:0000312" key="5">
    <source>
        <dbReference type="EMBL" id="AAS01721.1"/>
    </source>
</evidence>
<protein>
    <recommendedName>
        <fullName>Phosphoenolpyruvate carboxylase 2</fullName>
        <shortName>PEP carboxylase 2</shortName>
        <shortName>PEPC 2</shortName>
        <shortName>PEPCase 2</shortName>
        <ecNumber>4.1.1.31</ecNumber>
    </recommendedName>
</protein>
<name>CAPP2_CHLRE</name>
<sequence length="1221" mass="131242">MTDSTYDFGAVRDDLTPLEDDCKLLGSLLDDCLRVEIGETMFKKIERIRALAQCASNLSIKGDAGASDMLSHRLAEELMNLDMDEAVPLTRACGHYLNLSGIAELHHGVRRDRATREPNPNSCDAVFARLITEGVDPEELYRAVSEQNVEVVLTAHPTQVNRRTLQYKHTRIAALLQQHDRSDLTAEERRNMVSELQREVAALWQTDELRRQKPTPLDEARGGLHIVEQSLWAAVPQYMRRLSAALKKHTGHDLPLQATPFRFGSWMGGDRDGNPNVTAKVTAHVTALARWMAADLYLREIDTLRFELSMNQCSAAVWKMARRIIAEGHTKRAGVVRAKAAAALHQTATDAASHGGSAASAAAAAAAGGDVVADGTSGGGAAAAAGPAAAAAADDAFTFSRLGRPRPERPSTDVRSVGVLAGGEGAAFPGGMILGTQPVSAHTAAEVSVPHELPGQDVEGGSEMDFNESRRASDAGDLGASQHPMLGGPSAGASAEPTAHGYTTTATAAAAAADGTQPEPEVPGTPSYADPGTPDRLGALPGPFTPGPTPFREAANAAMSTAASGGAGGGGGGGANRAASGLGGDPTFTRRSLMAQRLGTSSVQFARAHEHPGFHPYRIVLGHVRDRLAATRRRMEDLLSGREPAGEAHGGVGAGGGGGGGAAPWYESEDELAEPLMACYWSLWECGGGVIADGRLLDLIRRVYTFGMCLMKLDLRQESTRHAEALDAVTSYLGLGSYLEWSEDQKIEWLTKELQGRRPLIPADMPMSAEVREVLDTFKVAAHLGRDNLGAYVISMTKGASDVMAVELLQREARMQVGAEAGGRGGGGPEDGGSLRVVPLFETLEDLDAAEDVMTRLLTNPWYREHLRAVHGDAQEVMLGYSDSGKDAGRLAANWALYKCQERLVAITKANNVKLTLFHGRGGTVGRGGGPTHIAIQSQPPGSVEGTFRITEQGEMVQAKFGISGVALSQLETYTTAVLLATMRPPSPPRREEWRAVMEMLSRVSCESYRNIVHHSPLFLRYFKHATPEAELGNLYIGSRPARRRNKDASISTLRAIPWIFAWTQNRLILPSWLGIGAALTAAMTQGHLPTLQAMYREWPFFGSTVDLIEMILAKTDPRIAALYEEVLVNDPEEKKLGAELRERLQRCQGAILKVTGHENLLSNNPTLSKLISMRSPFVDPINILQVEVLRRLRQDPNNMRLRDALLISINGIAAGMRNTG</sequence>
<reference key="1">
    <citation type="journal article" date="2005" name="Plant J.">
        <title>Identification and expression analysis of two inorganic C- and N-responsive genes encoding novel and distinct molecular forms of eukaryotic phosphoenolpyruvate carboxylase in the green microalga Chlamydomonas reinhardtii.</title>
        <authorList>
            <person name="Mamedov T.G."/>
            <person name="Moellering E.R."/>
            <person name="Chollet R."/>
        </authorList>
    </citation>
    <scope>NUCLEOTIDE SEQUENCE [MRNA]</scope>
    <source>
        <strain>137c / CC-125</strain>
    </source>
</reference>
<proteinExistence type="evidence at transcript level"/>
<dbReference type="EC" id="4.1.1.31"/>
<dbReference type="EMBL" id="AY517643">
    <property type="protein sequence ID" value="AAS01721.1"/>
    <property type="molecule type" value="mRNA"/>
</dbReference>
<dbReference type="SMR" id="Q6R2V6"/>
<dbReference type="BRENDA" id="4.1.1.31">
    <property type="organism ID" value="1318"/>
</dbReference>
<dbReference type="GO" id="GO:0005737">
    <property type="term" value="C:cytoplasm"/>
    <property type="evidence" value="ECO:0007669"/>
    <property type="project" value="UniProtKB-SubCell"/>
</dbReference>
<dbReference type="GO" id="GO:0008964">
    <property type="term" value="F:phosphoenolpyruvate carboxylase activity"/>
    <property type="evidence" value="ECO:0007669"/>
    <property type="project" value="UniProtKB-EC"/>
</dbReference>
<dbReference type="GO" id="GO:0015977">
    <property type="term" value="P:carbon fixation"/>
    <property type="evidence" value="ECO:0007669"/>
    <property type="project" value="UniProtKB-KW"/>
</dbReference>
<dbReference type="GO" id="GO:0006099">
    <property type="term" value="P:tricarboxylic acid cycle"/>
    <property type="evidence" value="ECO:0007669"/>
    <property type="project" value="InterPro"/>
</dbReference>
<dbReference type="Gene3D" id="1.20.1440.90">
    <property type="entry name" value="Phosphoenolpyruvate/pyruvate domain"/>
    <property type="match status" value="2"/>
</dbReference>
<dbReference type="HAMAP" id="MF_00595">
    <property type="entry name" value="PEPcase_type1"/>
    <property type="match status" value="1"/>
</dbReference>
<dbReference type="InterPro" id="IPR021135">
    <property type="entry name" value="PEP_COase"/>
</dbReference>
<dbReference type="InterPro" id="IPR022805">
    <property type="entry name" value="PEP_COase_bac/pln-type"/>
</dbReference>
<dbReference type="InterPro" id="IPR018129">
    <property type="entry name" value="PEP_COase_Lys_AS"/>
</dbReference>
<dbReference type="InterPro" id="IPR033129">
    <property type="entry name" value="PEPCASE_His_AS"/>
</dbReference>
<dbReference type="InterPro" id="IPR015813">
    <property type="entry name" value="Pyrv/PenolPyrv_kinase-like_dom"/>
</dbReference>
<dbReference type="PANTHER" id="PTHR30523">
    <property type="entry name" value="PHOSPHOENOLPYRUVATE CARBOXYLASE"/>
    <property type="match status" value="1"/>
</dbReference>
<dbReference type="PANTHER" id="PTHR30523:SF6">
    <property type="entry name" value="PHOSPHOENOLPYRUVATE CARBOXYLASE"/>
    <property type="match status" value="1"/>
</dbReference>
<dbReference type="Pfam" id="PF00311">
    <property type="entry name" value="PEPcase"/>
    <property type="match status" value="2"/>
</dbReference>
<dbReference type="PRINTS" id="PR00150">
    <property type="entry name" value="PEPCARBXLASE"/>
</dbReference>
<dbReference type="SUPFAM" id="SSF51621">
    <property type="entry name" value="Phosphoenolpyruvate/pyruvate domain"/>
    <property type="match status" value="2"/>
</dbReference>
<dbReference type="PROSITE" id="PS00781">
    <property type="entry name" value="PEPCASE_1"/>
    <property type="match status" value="1"/>
</dbReference>
<dbReference type="PROSITE" id="PS00393">
    <property type="entry name" value="PEPCASE_2"/>
    <property type="match status" value="1"/>
</dbReference>
<organism>
    <name type="scientific">Chlamydomonas reinhardtii</name>
    <name type="common">Chlamydomonas smithii</name>
    <dbReference type="NCBI Taxonomy" id="3055"/>
    <lineage>
        <taxon>Eukaryota</taxon>
        <taxon>Viridiplantae</taxon>
        <taxon>Chlorophyta</taxon>
        <taxon>core chlorophytes</taxon>
        <taxon>Chlorophyceae</taxon>
        <taxon>CS clade</taxon>
        <taxon>Chlamydomonadales</taxon>
        <taxon>Chlamydomonadaceae</taxon>
        <taxon>Chlamydomonas</taxon>
    </lineage>
</organism>
<gene>
    <name evidence="5" type="primary">Ppc2</name>
</gene>